<organism>
    <name type="scientific">Streptococcus pyogenes serotype M3 (strain SSI-1)</name>
    <dbReference type="NCBI Taxonomy" id="193567"/>
    <lineage>
        <taxon>Bacteria</taxon>
        <taxon>Bacillati</taxon>
        <taxon>Bacillota</taxon>
        <taxon>Bacilli</taxon>
        <taxon>Lactobacillales</taxon>
        <taxon>Streptococcaceae</taxon>
        <taxon>Streptococcus</taxon>
    </lineage>
</organism>
<name>FMT_STRPQ</name>
<evidence type="ECO:0000255" key="1">
    <source>
        <dbReference type="HAMAP-Rule" id="MF_00182"/>
    </source>
</evidence>
<comment type="function">
    <text evidence="1">Attaches a formyl group to the free amino group of methionyl-tRNA(fMet). The formyl group appears to play a dual role in the initiator identity of N-formylmethionyl-tRNA by promoting its recognition by IF2 and preventing the misappropriation of this tRNA by the elongation apparatus.</text>
</comment>
<comment type="catalytic activity">
    <reaction evidence="1">
        <text>L-methionyl-tRNA(fMet) + (6R)-10-formyltetrahydrofolate = N-formyl-L-methionyl-tRNA(fMet) + (6S)-5,6,7,8-tetrahydrofolate + H(+)</text>
        <dbReference type="Rhea" id="RHEA:24380"/>
        <dbReference type="Rhea" id="RHEA-COMP:9952"/>
        <dbReference type="Rhea" id="RHEA-COMP:9953"/>
        <dbReference type="ChEBI" id="CHEBI:15378"/>
        <dbReference type="ChEBI" id="CHEBI:57453"/>
        <dbReference type="ChEBI" id="CHEBI:78530"/>
        <dbReference type="ChEBI" id="CHEBI:78844"/>
        <dbReference type="ChEBI" id="CHEBI:195366"/>
        <dbReference type="EC" id="2.1.2.9"/>
    </reaction>
</comment>
<comment type="similarity">
    <text evidence="1">Belongs to the Fmt family.</text>
</comment>
<reference key="1">
    <citation type="journal article" date="2003" name="Genome Res.">
        <title>Genome sequence of an M3 strain of Streptococcus pyogenes reveals a large-scale genomic rearrangement in invasive strains and new insights into phage evolution.</title>
        <authorList>
            <person name="Nakagawa I."/>
            <person name="Kurokawa K."/>
            <person name="Yamashita A."/>
            <person name="Nakata M."/>
            <person name="Tomiyasu Y."/>
            <person name="Okahashi N."/>
            <person name="Kawabata S."/>
            <person name="Yamazaki K."/>
            <person name="Shiba T."/>
            <person name="Yasunaga T."/>
            <person name="Hayashi H."/>
            <person name="Hattori M."/>
            <person name="Hamada S."/>
        </authorList>
    </citation>
    <scope>NUCLEOTIDE SEQUENCE [LARGE SCALE GENOMIC DNA]</scope>
    <source>
        <strain>SSI-1</strain>
    </source>
</reference>
<sequence>MIKLLFMGTPQFSATVLKGLLDNPAYEILGVVTQPDRAVGRKKDIKVTPVKQLALEHGISIYQPEKLSGSQELIEIMGLGADGIITAAFGQFLPTILLDSVSFAINVHASLLPKYRGGAPIHYAIMNGDKEAGVTIMEMIKEMDAGDMVAKASTPILETDNVGTLFEKLAIIGRDLLLDSLPAYLSGELKPIPQDHSQATFSPNISPEQEKLDWTMFNQEVFNHIRGMNPWPVAHTFLEGQRLKIYEAQLAEGEGLPGQVIVKTKKSLVIATGQGALSLIVVQPAGKPKMSIIDFLNGIGRKLEVGDIIGR</sequence>
<proteinExistence type="inferred from homology"/>
<keyword id="KW-0648">Protein biosynthesis</keyword>
<keyword id="KW-0808">Transferase</keyword>
<feature type="chain" id="PRO_0000411340" description="Methionyl-tRNA formyltransferase">
    <location>
        <begin position="1"/>
        <end position="311"/>
    </location>
</feature>
<feature type="binding site" evidence="1">
    <location>
        <begin position="110"/>
        <end position="113"/>
    </location>
    <ligand>
        <name>(6S)-5,6,7,8-tetrahydrofolate</name>
        <dbReference type="ChEBI" id="CHEBI:57453"/>
    </ligand>
</feature>
<dbReference type="EC" id="2.1.2.9" evidence="1"/>
<dbReference type="EMBL" id="BA000034">
    <property type="protein sequence ID" value="BAC63585.1"/>
    <property type="molecule type" value="Genomic_DNA"/>
</dbReference>
<dbReference type="RefSeq" id="WP_011054834.1">
    <property type="nucleotide sequence ID" value="NC_004606.1"/>
</dbReference>
<dbReference type="SMR" id="P0DB05"/>
<dbReference type="KEGG" id="sps:SPs0490"/>
<dbReference type="HOGENOM" id="CLU_033347_1_1_9"/>
<dbReference type="GO" id="GO:0005829">
    <property type="term" value="C:cytosol"/>
    <property type="evidence" value="ECO:0007669"/>
    <property type="project" value="TreeGrafter"/>
</dbReference>
<dbReference type="GO" id="GO:0004479">
    <property type="term" value="F:methionyl-tRNA formyltransferase activity"/>
    <property type="evidence" value="ECO:0007669"/>
    <property type="project" value="UniProtKB-UniRule"/>
</dbReference>
<dbReference type="CDD" id="cd08646">
    <property type="entry name" value="FMT_core_Met-tRNA-FMT_N"/>
    <property type="match status" value="1"/>
</dbReference>
<dbReference type="CDD" id="cd08704">
    <property type="entry name" value="Met_tRNA_FMT_C"/>
    <property type="match status" value="1"/>
</dbReference>
<dbReference type="FunFam" id="3.40.50.170:FF:000004">
    <property type="entry name" value="Methionyl-tRNA formyltransferase"/>
    <property type="match status" value="1"/>
</dbReference>
<dbReference type="Gene3D" id="3.10.25.10">
    <property type="entry name" value="Formyl transferase, C-terminal domain"/>
    <property type="match status" value="1"/>
</dbReference>
<dbReference type="Gene3D" id="3.40.50.170">
    <property type="entry name" value="Formyl transferase, N-terminal domain"/>
    <property type="match status" value="1"/>
</dbReference>
<dbReference type="HAMAP" id="MF_00182">
    <property type="entry name" value="Formyl_trans"/>
    <property type="match status" value="1"/>
</dbReference>
<dbReference type="InterPro" id="IPR005794">
    <property type="entry name" value="Fmt"/>
</dbReference>
<dbReference type="InterPro" id="IPR005793">
    <property type="entry name" value="Formyl_trans_C"/>
</dbReference>
<dbReference type="InterPro" id="IPR037022">
    <property type="entry name" value="Formyl_trans_C_sf"/>
</dbReference>
<dbReference type="InterPro" id="IPR002376">
    <property type="entry name" value="Formyl_transf_N"/>
</dbReference>
<dbReference type="InterPro" id="IPR036477">
    <property type="entry name" value="Formyl_transf_N_sf"/>
</dbReference>
<dbReference type="InterPro" id="IPR011034">
    <property type="entry name" value="Formyl_transferase-like_C_sf"/>
</dbReference>
<dbReference type="InterPro" id="IPR001555">
    <property type="entry name" value="GART_AS"/>
</dbReference>
<dbReference type="InterPro" id="IPR044135">
    <property type="entry name" value="Met-tRNA-FMT_C"/>
</dbReference>
<dbReference type="InterPro" id="IPR041711">
    <property type="entry name" value="Met-tRNA-FMT_N"/>
</dbReference>
<dbReference type="NCBIfam" id="TIGR00460">
    <property type="entry name" value="fmt"/>
    <property type="match status" value="1"/>
</dbReference>
<dbReference type="PANTHER" id="PTHR11138">
    <property type="entry name" value="METHIONYL-TRNA FORMYLTRANSFERASE"/>
    <property type="match status" value="1"/>
</dbReference>
<dbReference type="PANTHER" id="PTHR11138:SF5">
    <property type="entry name" value="METHIONYL-TRNA FORMYLTRANSFERASE, MITOCHONDRIAL"/>
    <property type="match status" value="1"/>
</dbReference>
<dbReference type="Pfam" id="PF02911">
    <property type="entry name" value="Formyl_trans_C"/>
    <property type="match status" value="1"/>
</dbReference>
<dbReference type="Pfam" id="PF00551">
    <property type="entry name" value="Formyl_trans_N"/>
    <property type="match status" value="1"/>
</dbReference>
<dbReference type="SUPFAM" id="SSF50486">
    <property type="entry name" value="FMT C-terminal domain-like"/>
    <property type="match status" value="1"/>
</dbReference>
<dbReference type="SUPFAM" id="SSF53328">
    <property type="entry name" value="Formyltransferase"/>
    <property type="match status" value="1"/>
</dbReference>
<dbReference type="PROSITE" id="PS00373">
    <property type="entry name" value="GART"/>
    <property type="match status" value="1"/>
</dbReference>
<gene>
    <name evidence="1" type="primary">fmt</name>
    <name type="ordered locus">SPs0490</name>
</gene>
<protein>
    <recommendedName>
        <fullName evidence="1">Methionyl-tRNA formyltransferase</fullName>
        <ecNumber evidence="1">2.1.2.9</ecNumber>
    </recommendedName>
</protein>
<accession>P0DB05</accession>
<accession>Q8K6E8</accession>